<evidence type="ECO:0000305" key="1"/>
<accession>Q895A7</accession>
<comment type="similarity">
    <text evidence="1">Belongs to the UPF0251 family.</text>
</comment>
<dbReference type="EMBL" id="AE015927">
    <property type="protein sequence ID" value="AAO35933.1"/>
    <property type="molecule type" value="Genomic_DNA"/>
</dbReference>
<dbReference type="RefSeq" id="WP_011099595.1">
    <property type="nucleotide sequence ID" value="NC_004557.1"/>
</dbReference>
<dbReference type="STRING" id="212717.CTC_01373"/>
<dbReference type="GeneID" id="24253126"/>
<dbReference type="KEGG" id="ctc:CTC_01373"/>
<dbReference type="HOGENOM" id="CLU_094511_0_1_9"/>
<dbReference type="OrthoDB" id="280278at2"/>
<dbReference type="Proteomes" id="UP000001412">
    <property type="component" value="Chromosome"/>
</dbReference>
<dbReference type="HAMAP" id="MF_00674">
    <property type="entry name" value="UPF0251"/>
    <property type="match status" value="1"/>
</dbReference>
<dbReference type="InterPro" id="IPR002852">
    <property type="entry name" value="UPF0251"/>
</dbReference>
<dbReference type="PANTHER" id="PTHR37478">
    <property type="match status" value="1"/>
</dbReference>
<dbReference type="PANTHER" id="PTHR37478:SF2">
    <property type="entry name" value="UPF0251 PROTEIN TK0562"/>
    <property type="match status" value="1"/>
</dbReference>
<dbReference type="Pfam" id="PF02001">
    <property type="entry name" value="DUF134"/>
    <property type="match status" value="1"/>
</dbReference>
<sequence>MARPTKFRRVEFFPEDNYFVPWGKPKCQIEEMVLKVEELEAMRLKDIEKLNQEECAQKMEVSRQTFQNIIDSARNKVAIALTEGKAIKISGGNYTTKLCKYRCLDCENIYEINYKQDRDTCPACGSEKIVCSRKADFCRRWCKGHNK</sequence>
<protein>
    <recommendedName>
        <fullName>UPF0251 protein CTC_01373</fullName>
    </recommendedName>
</protein>
<proteinExistence type="inferred from homology"/>
<keyword id="KW-1185">Reference proteome</keyword>
<organism>
    <name type="scientific">Clostridium tetani (strain Massachusetts / E88)</name>
    <dbReference type="NCBI Taxonomy" id="212717"/>
    <lineage>
        <taxon>Bacteria</taxon>
        <taxon>Bacillati</taxon>
        <taxon>Bacillota</taxon>
        <taxon>Clostridia</taxon>
        <taxon>Eubacteriales</taxon>
        <taxon>Clostridiaceae</taxon>
        <taxon>Clostridium</taxon>
    </lineage>
</organism>
<gene>
    <name type="ordered locus">CTC_01373</name>
</gene>
<feature type="chain" id="PRO_0000147589" description="UPF0251 protein CTC_01373">
    <location>
        <begin position="1"/>
        <end position="147"/>
    </location>
</feature>
<reference key="1">
    <citation type="journal article" date="2003" name="Proc. Natl. Acad. Sci. U.S.A.">
        <title>The genome sequence of Clostridium tetani, the causative agent of tetanus disease.</title>
        <authorList>
            <person name="Brueggemann H."/>
            <person name="Baeumer S."/>
            <person name="Fricke W.F."/>
            <person name="Wiezer A."/>
            <person name="Liesegang H."/>
            <person name="Decker I."/>
            <person name="Herzberg C."/>
            <person name="Martinez-Arias R."/>
            <person name="Merkl R."/>
            <person name="Henne A."/>
            <person name="Gottschalk G."/>
        </authorList>
    </citation>
    <scope>NUCLEOTIDE SEQUENCE [LARGE SCALE GENOMIC DNA]</scope>
    <source>
        <strain>Massachusetts / E88</strain>
    </source>
</reference>
<name>Y1373_CLOTE</name>